<name>RS24_HALS3</name>
<comment type="similarity">
    <text evidence="1">Belongs to the eukaryotic ribosomal protein eS24 family.</text>
</comment>
<feature type="chain" id="PRO_1000128918" description="Small ribosomal subunit protein eS24">
    <location>
        <begin position="1"/>
        <end position="102"/>
    </location>
</feature>
<feature type="region of interest" description="Disordered" evidence="2">
    <location>
        <begin position="70"/>
        <end position="102"/>
    </location>
</feature>
<feature type="compositionally biased region" description="Basic and acidic residues" evidence="2">
    <location>
        <begin position="79"/>
        <end position="93"/>
    </location>
</feature>
<protein>
    <recommendedName>
        <fullName evidence="1">Small ribosomal subunit protein eS24</fullName>
    </recommendedName>
    <alternativeName>
        <fullName evidence="3">30S ribosomal protein S24e</fullName>
    </alternativeName>
</protein>
<dbReference type="EMBL" id="AM774415">
    <property type="protein sequence ID" value="CAP14501.1"/>
    <property type="molecule type" value="Genomic_DNA"/>
</dbReference>
<dbReference type="RefSeq" id="WP_010903507.1">
    <property type="nucleotide sequence ID" value="NC_010364.1"/>
</dbReference>
<dbReference type="SMR" id="B0R6Y2"/>
<dbReference type="EnsemblBacteria" id="CAP14501">
    <property type="protein sequence ID" value="CAP14501"/>
    <property type="gene ID" value="OE_3869R"/>
</dbReference>
<dbReference type="KEGG" id="hsl:OE_3869R"/>
<dbReference type="HOGENOM" id="CLU_107248_3_1_2"/>
<dbReference type="PhylomeDB" id="B0R6Y2"/>
<dbReference type="Proteomes" id="UP000001321">
    <property type="component" value="Chromosome"/>
</dbReference>
<dbReference type="GO" id="GO:1990904">
    <property type="term" value="C:ribonucleoprotein complex"/>
    <property type="evidence" value="ECO:0007669"/>
    <property type="project" value="UniProtKB-KW"/>
</dbReference>
<dbReference type="GO" id="GO:0005840">
    <property type="term" value="C:ribosome"/>
    <property type="evidence" value="ECO:0007669"/>
    <property type="project" value="UniProtKB-KW"/>
</dbReference>
<dbReference type="GO" id="GO:0003735">
    <property type="term" value="F:structural constituent of ribosome"/>
    <property type="evidence" value="ECO:0007669"/>
    <property type="project" value="InterPro"/>
</dbReference>
<dbReference type="GO" id="GO:0006412">
    <property type="term" value="P:translation"/>
    <property type="evidence" value="ECO:0007669"/>
    <property type="project" value="UniProtKB-UniRule"/>
</dbReference>
<dbReference type="Gene3D" id="3.30.70.330">
    <property type="match status" value="1"/>
</dbReference>
<dbReference type="HAMAP" id="MF_00545">
    <property type="entry name" value="Ribosomal_eS24"/>
    <property type="match status" value="1"/>
</dbReference>
<dbReference type="InterPro" id="IPR012677">
    <property type="entry name" value="Nucleotide-bd_a/b_plait_sf"/>
</dbReference>
<dbReference type="InterPro" id="IPR001976">
    <property type="entry name" value="Ribosomal_eS24"/>
</dbReference>
<dbReference type="InterPro" id="IPR018098">
    <property type="entry name" value="Ribosomal_eS24_CS"/>
</dbReference>
<dbReference type="InterPro" id="IPR012678">
    <property type="entry name" value="Ribosomal_uL23/eL15/eS24_sf"/>
</dbReference>
<dbReference type="PANTHER" id="PTHR10496">
    <property type="entry name" value="40S RIBOSOMAL PROTEIN S24"/>
    <property type="match status" value="1"/>
</dbReference>
<dbReference type="Pfam" id="PF01282">
    <property type="entry name" value="Ribosomal_S24e"/>
    <property type="match status" value="1"/>
</dbReference>
<dbReference type="SUPFAM" id="SSF54189">
    <property type="entry name" value="Ribosomal proteins S24e, L23 and L15e"/>
    <property type="match status" value="1"/>
</dbReference>
<dbReference type="PROSITE" id="PS00529">
    <property type="entry name" value="RIBOSOMAL_S24E"/>
    <property type="match status" value="1"/>
</dbReference>
<organism>
    <name type="scientific">Halobacterium salinarum (strain ATCC 29341 / DSM 671 / R1)</name>
    <dbReference type="NCBI Taxonomy" id="478009"/>
    <lineage>
        <taxon>Archaea</taxon>
        <taxon>Methanobacteriati</taxon>
        <taxon>Methanobacteriota</taxon>
        <taxon>Stenosarchaea group</taxon>
        <taxon>Halobacteria</taxon>
        <taxon>Halobacteriales</taxon>
        <taxon>Halobacteriaceae</taxon>
        <taxon>Halobacterium</taxon>
        <taxon>Halobacterium salinarum NRC-34001</taxon>
    </lineage>
</organism>
<proteinExistence type="inferred from homology"/>
<keyword id="KW-0687">Ribonucleoprotein</keyword>
<keyword id="KW-0689">Ribosomal protein</keyword>
<evidence type="ECO:0000255" key="1">
    <source>
        <dbReference type="HAMAP-Rule" id="MF_00545"/>
    </source>
</evidence>
<evidence type="ECO:0000256" key="2">
    <source>
        <dbReference type="SAM" id="MobiDB-lite"/>
    </source>
</evidence>
<evidence type="ECO:0000305" key="3"/>
<reference key="1">
    <citation type="journal article" date="2008" name="Genomics">
        <title>Evolution in the laboratory: the genome of Halobacterium salinarum strain R1 compared to that of strain NRC-1.</title>
        <authorList>
            <person name="Pfeiffer F."/>
            <person name="Schuster S.C."/>
            <person name="Broicher A."/>
            <person name="Falb M."/>
            <person name="Palm P."/>
            <person name="Rodewald K."/>
            <person name="Ruepp A."/>
            <person name="Soppa J."/>
            <person name="Tittor J."/>
            <person name="Oesterhelt D."/>
        </authorList>
    </citation>
    <scope>NUCLEOTIDE SEQUENCE [LARGE SCALE GENOMIC DNA]</scope>
    <source>
        <strain>ATCC 29341 / DSM 671 / R1</strain>
    </source>
</reference>
<sequence>MEIEILGQEDNPLLHRTDVQFKIVHDDATPSRLSVRDSLAAKLDKDSEEVVVHELDTKFGMRKTRGRAKVYDSPAQAAEVEHDHMLERNKIGADDADAEEAE</sequence>
<accession>B0R6Y2</accession>
<gene>
    <name evidence="1" type="primary">rps24e</name>
    <name type="ordered locus">OE_3869R</name>
</gene>